<gene>
    <name evidence="1" type="primary">rplT</name>
    <name evidence="1" type="synonym">rpl20</name>
    <name type="ordered locus">PMT_0055</name>
</gene>
<sequence>MARVKRGNVARKRRNKILRLARGFQGSNGSLFRTANQRVMKALCNAYRDRRRRKRDFRRLWIARINAAARINGVSYSRLIGGLKKADVRINRKMLAQLAVMDPKSFTSVVTSAKS</sequence>
<protein>
    <recommendedName>
        <fullName evidence="1">Large ribosomal subunit protein bL20</fullName>
    </recommendedName>
    <alternativeName>
        <fullName evidence="2">50S ribosomal protein L20</fullName>
    </alternativeName>
</protein>
<name>RL20_PROMM</name>
<comment type="function">
    <text evidence="1">Binds directly to 23S ribosomal RNA and is necessary for the in vitro assembly process of the 50S ribosomal subunit. It is not involved in the protein synthesizing functions of that subunit.</text>
</comment>
<comment type="similarity">
    <text evidence="1">Belongs to the bacterial ribosomal protein bL20 family.</text>
</comment>
<organism>
    <name type="scientific">Prochlorococcus marinus (strain MIT 9313)</name>
    <dbReference type="NCBI Taxonomy" id="74547"/>
    <lineage>
        <taxon>Bacteria</taxon>
        <taxon>Bacillati</taxon>
        <taxon>Cyanobacteriota</taxon>
        <taxon>Cyanophyceae</taxon>
        <taxon>Synechococcales</taxon>
        <taxon>Prochlorococcaceae</taxon>
        <taxon>Prochlorococcus</taxon>
    </lineage>
</organism>
<proteinExistence type="inferred from homology"/>
<evidence type="ECO:0000255" key="1">
    <source>
        <dbReference type="HAMAP-Rule" id="MF_00382"/>
    </source>
</evidence>
<evidence type="ECO:0000305" key="2"/>
<reference key="1">
    <citation type="journal article" date="2003" name="Nature">
        <title>Genome divergence in two Prochlorococcus ecotypes reflects oceanic niche differentiation.</title>
        <authorList>
            <person name="Rocap G."/>
            <person name="Larimer F.W."/>
            <person name="Lamerdin J.E."/>
            <person name="Malfatti S."/>
            <person name="Chain P."/>
            <person name="Ahlgren N.A."/>
            <person name="Arellano A."/>
            <person name="Coleman M."/>
            <person name="Hauser L."/>
            <person name="Hess W.R."/>
            <person name="Johnson Z.I."/>
            <person name="Land M.L."/>
            <person name="Lindell D."/>
            <person name="Post A.F."/>
            <person name="Regala W."/>
            <person name="Shah M."/>
            <person name="Shaw S.L."/>
            <person name="Steglich C."/>
            <person name="Sullivan M.B."/>
            <person name="Ting C.S."/>
            <person name="Tolonen A."/>
            <person name="Webb E.A."/>
            <person name="Zinser E.R."/>
            <person name="Chisholm S.W."/>
        </authorList>
    </citation>
    <scope>NUCLEOTIDE SEQUENCE [LARGE SCALE GENOMIC DNA]</scope>
    <source>
        <strain>MIT 9313</strain>
    </source>
</reference>
<accession>Q7V999</accession>
<keyword id="KW-1185">Reference proteome</keyword>
<keyword id="KW-0687">Ribonucleoprotein</keyword>
<keyword id="KW-0689">Ribosomal protein</keyword>
<keyword id="KW-0694">RNA-binding</keyword>
<keyword id="KW-0699">rRNA-binding</keyword>
<feature type="chain" id="PRO_0000177204" description="Large ribosomal subunit protein bL20">
    <location>
        <begin position="1"/>
        <end position="115"/>
    </location>
</feature>
<dbReference type="EMBL" id="BX548175">
    <property type="protein sequence ID" value="CAE20230.1"/>
    <property type="molecule type" value="Genomic_DNA"/>
</dbReference>
<dbReference type="RefSeq" id="WP_011129434.1">
    <property type="nucleotide sequence ID" value="NC_005071.1"/>
</dbReference>
<dbReference type="SMR" id="Q7V999"/>
<dbReference type="KEGG" id="pmt:PMT_0055"/>
<dbReference type="eggNOG" id="COG0292">
    <property type="taxonomic scope" value="Bacteria"/>
</dbReference>
<dbReference type="HOGENOM" id="CLU_123265_0_1_3"/>
<dbReference type="OrthoDB" id="9808966at2"/>
<dbReference type="Proteomes" id="UP000001423">
    <property type="component" value="Chromosome"/>
</dbReference>
<dbReference type="GO" id="GO:1990904">
    <property type="term" value="C:ribonucleoprotein complex"/>
    <property type="evidence" value="ECO:0007669"/>
    <property type="project" value="UniProtKB-KW"/>
</dbReference>
<dbReference type="GO" id="GO:0005840">
    <property type="term" value="C:ribosome"/>
    <property type="evidence" value="ECO:0007669"/>
    <property type="project" value="UniProtKB-KW"/>
</dbReference>
<dbReference type="GO" id="GO:0019843">
    <property type="term" value="F:rRNA binding"/>
    <property type="evidence" value="ECO:0007669"/>
    <property type="project" value="UniProtKB-UniRule"/>
</dbReference>
<dbReference type="GO" id="GO:0003735">
    <property type="term" value="F:structural constituent of ribosome"/>
    <property type="evidence" value="ECO:0007669"/>
    <property type="project" value="InterPro"/>
</dbReference>
<dbReference type="GO" id="GO:0000027">
    <property type="term" value="P:ribosomal large subunit assembly"/>
    <property type="evidence" value="ECO:0007669"/>
    <property type="project" value="UniProtKB-UniRule"/>
</dbReference>
<dbReference type="GO" id="GO:0006412">
    <property type="term" value="P:translation"/>
    <property type="evidence" value="ECO:0007669"/>
    <property type="project" value="InterPro"/>
</dbReference>
<dbReference type="CDD" id="cd07026">
    <property type="entry name" value="Ribosomal_L20"/>
    <property type="match status" value="1"/>
</dbReference>
<dbReference type="FunFam" id="1.10.1900.20:FF:000001">
    <property type="entry name" value="50S ribosomal protein L20"/>
    <property type="match status" value="1"/>
</dbReference>
<dbReference type="Gene3D" id="6.10.160.10">
    <property type="match status" value="1"/>
</dbReference>
<dbReference type="Gene3D" id="1.10.1900.20">
    <property type="entry name" value="Ribosomal protein L20"/>
    <property type="match status" value="1"/>
</dbReference>
<dbReference type="HAMAP" id="MF_00382">
    <property type="entry name" value="Ribosomal_bL20"/>
    <property type="match status" value="1"/>
</dbReference>
<dbReference type="InterPro" id="IPR005813">
    <property type="entry name" value="Ribosomal_bL20"/>
</dbReference>
<dbReference type="InterPro" id="IPR049946">
    <property type="entry name" value="RIBOSOMAL_L20_CS"/>
</dbReference>
<dbReference type="InterPro" id="IPR035566">
    <property type="entry name" value="Ribosomal_protein_bL20_C"/>
</dbReference>
<dbReference type="NCBIfam" id="TIGR01032">
    <property type="entry name" value="rplT_bact"/>
    <property type="match status" value="1"/>
</dbReference>
<dbReference type="PANTHER" id="PTHR10986">
    <property type="entry name" value="39S RIBOSOMAL PROTEIN L20"/>
    <property type="match status" value="1"/>
</dbReference>
<dbReference type="Pfam" id="PF00453">
    <property type="entry name" value="Ribosomal_L20"/>
    <property type="match status" value="1"/>
</dbReference>
<dbReference type="PRINTS" id="PR00062">
    <property type="entry name" value="RIBOSOMALL20"/>
</dbReference>
<dbReference type="SUPFAM" id="SSF74731">
    <property type="entry name" value="Ribosomal protein L20"/>
    <property type="match status" value="1"/>
</dbReference>
<dbReference type="PROSITE" id="PS00937">
    <property type="entry name" value="RIBOSOMAL_L20"/>
    <property type="match status" value="1"/>
</dbReference>